<keyword id="KW-0168">Coated pit</keyword>
<keyword id="KW-0968">Cytoplasmic vesicle</keyword>
<keyword id="KW-0472">Membrane</keyword>
<keyword id="KW-0597">Phosphoprotein</keyword>
<keyword id="KW-1185">Reference proteome</keyword>
<keyword id="KW-0677">Repeat</keyword>
<evidence type="ECO:0000250" key="1"/>
<evidence type="ECO:0000269" key="2">
    <source>
    </source>
</evidence>
<evidence type="ECO:0000305" key="3"/>
<protein>
    <recommendedName>
        <fullName>Probable clathrin heavy chain</fullName>
    </recommendedName>
</protein>
<name>CLH_SCHPO</name>
<feature type="chain" id="PRO_0000205784" description="Probable clathrin heavy chain">
    <location>
        <begin position="1"/>
        <end position="1666"/>
    </location>
</feature>
<feature type="repeat" description="CHCR 1">
    <location>
        <begin position="534"/>
        <end position="680"/>
    </location>
</feature>
<feature type="repeat" description="CHCR 2">
    <location>
        <begin position="683"/>
        <end position="825"/>
    </location>
</feature>
<feature type="repeat" description="CHCR 3">
    <location>
        <begin position="830"/>
        <end position="969"/>
    </location>
</feature>
<feature type="repeat" description="CHCR 4">
    <location>
        <begin position="975"/>
        <end position="1120"/>
    </location>
</feature>
<feature type="repeat" description="CHCR 5">
    <location>
        <begin position="1124"/>
        <end position="1265"/>
    </location>
</feature>
<feature type="repeat" description="CHCR 6">
    <location>
        <begin position="1270"/>
        <end position="1415"/>
    </location>
</feature>
<feature type="repeat" description="CHCR 7">
    <location>
        <begin position="1418"/>
        <end position="1561"/>
    </location>
</feature>
<feature type="region of interest" description="WD40-like repeat 1">
    <location>
        <begin position="24"/>
        <end position="67"/>
    </location>
</feature>
<feature type="region of interest" description="WD40-like repeat 2">
    <location>
        <begin position="68"/>
        <end position="107"/>
    </location>
</feature>
<feature type="region of interest" description="WD40-like repeat 3">
    <location>
        <begin position="108"/>
        <end position="148"/>
    </location>
</feature>
<feature type="region of interest" description="WD40-like repeat 4">
    <location>
        <begin position="149"/>
        <end position="194"/>
    </location>
</feature>
<feature type="region of interest" description="WD40-like repeat 5">
    <location>
        <begin position="195"/>
        <end position="255"/>
    </location>
</feature>
<feature type="region of interest" description="WD40-like repeat 6">
    <location>
        <begin position="256"/>
        <end position="299"/>
    </location>
</feature>
<feature type="region of interest" description="WD40-like repeat 7">
    <location>
        <begin position="300"/>
        <end position="328"/>
    </location>
</feature>
<feature type="modified residue" description="Phosphothreonine" evidence="2">
    <location>
        <position position="392"/>
    </location>
</feature>
<feature type="modified residue" description="Phosphoserine" evidence="2">
    <location>
        <position position="393"/>
    </location>
</feature>
<gene>
    <name type="primary">chc1</name>
    <name type="ORF">SPAC26A3.05</name>
</gene>
<comment type="function">
    <text evidence="1">Clathrin is the major protein of the polyhedral coat of coated pits and vesicles.</text>
</comment>
<comment type="subunit">
    <text evidence="1">Clathrin triskelions, composed of 3 heavy chains and 3 light chains, are the basic subunits of the clathrin coat.</text>
</comment>
<comment type="subcellular location">
    <subcellularLocation>
        <location evidence="1">Cytoplasmic vesicle membrane</location>
        <topology evidence="1">Peripheral membrane protein</topology>
        <orientation evidence="1">Cytoplasmic side</orientation>
    </subcellularLocation>
    <subcellularLocation>
        <location evidence="1">Membrane</location>
        <location evidence="1">Coated pit</location>
        <topology evidence="1">Peripheral membrane protein</topology>
        <orientation evidence="1">Cytoplasmic side</orientation>
    </subcellularLocation>
    <text evidence="1">Cytoplasmic face of coated pits and vesicles.</text>
</comment>
<comment type="domain">
    <text>The C-terminal third of the heavy chains forms the hub of the triskelion. This region contains the trimerization domain and the light-chain binding domain involved in the assembly of the clathrin lattice.</text>
</comment>
<comment type="domain">
    <text evidence="1">The N-terminal seven-bladed beta-propeller is formed by WD40-like repeats, and projects inward from the polyhedral outer clathrin coat. It constitutes a major protein-protein interaction node (By similarity).</text>
</comment>
<comment type="similarity">
    <text evidence="3">Belongs to the clathrin heavy chain family.</text>
</comment>
<dbReference type="EMBL" id="CU329670">
    <property type="protein sequence ID" value="CAA93228.1"/>
    <property type="molecule type" value="Genomic_DNA"/>
</dbReference>
<dbReference type="PIR" id="T38393">
    <property type="entry name" value="T38393"/>
</dbReference>
<dbReference type="RefSeq" id="NP_594148.1">
    <property type="nucleotide sequence ID" value="NM_001019572.2"/>
</dbReference>
<dbReference type="SMR" id="Q10161"/>
<dbReference type="BioGRID" id="278555">
    <property type="interactions" value="6"/>
</dbReference>
<dbReference type="FunCoup" id="Q10161">
    <property type="interactions" value="409"/>
</dbReference>
<dbReference type="STRING" id="284812.Q10161"/>
<dbReference type="iPTMnet" id="Q10161"/>
<dbReference type="PaxDb" id="4896-SPAC26A3.05.1"/>
<dbReference type="EnsemblFungi" id="SPAC26A3.05.1">
    <property type="protein sequence ID" value="SPAC26A3.05.1:pep"/>
    <property type="gene ID" value="SPAC26A3.05"/>
</dbReference>
<dbReference type="GeneID" id="2542078"/>
<dbReference type="KEGG" id="spo:2542078"/>
<dbReference type="PomBase" id="SPAC26A3.05">
    <property type="gene designation" value="chc1"/>
</dbReference>
<dbReference type="VEuPathDB" id="FungiDB:SPAC26A3.05"/>
<dbReference type="eggNOG" id="KOG0985">
    <property type="taxonomic scope" value="Eukaryota"/>
</dbReference>
<dbReference type="HOGENOM" id="CLU_002136_0_0_1"/>
<dbReference type="InParanoid" id="Q10161"/>
<dbReference type="OMA" id="HCYDLLH"/>
<dbReference type="PhylomeDB" id="Q10161"/>
<dbReference type="Reactome" id="R-SPO-432720">
    <property type="pathway name" value="Lysosome Vesicle Biogenesis"/>
</dbReference>
<dbReference type="Reactome" id="R-SPO-437239">
    <property type="pathway name" value="Recycling pathway of L1"/>
</dbReference>
<dbReference type="Reactome" id="R-SPO-8856828">
    <property type="pathway name" value="Clathrin-mediated endocytosis"/>
</dbReference>
<dbReference type="Reactome" id="R-SPO-8866427">
    <property type="pathway name" value="VLDLR internalisation and degradation"/>
</dbReference>
<dbReference type="Reactome" id="R-SPO-8964038">
    <property type="pathway name" value="LDL clearance"/>
</dbReference>
<dbReference type="Reactome" id="R-SPO-9013420">
    <property type="pathway name" value="RHOU GTPase cycle"/>
</dbReference>
<dbReference type="Reactome" id="R-SPO-9013424">
    <property type="pathway name" value="RHOV GTPase cycle"/>
</dbReference>
<dbReference type="PRO" id="PR:Q10161"/>
<dbReference type="Proteomes" id="UP000002485">
    <property type="component" value="Chromosome I"/>
</dbReference>
<dbReference type="GO" id="GO:0030479">
    <property type="term" value="C:actin cortical patch"/>
    <property type="evidence" value="ECO:0000314"/>
    <property type="project" value="PomBase"/>
</dbReference>
<dbReference type="GO" id="GO:0030132">
    <property type="term" value="C:clathrin coat of coated pit"/>
    <property type="evidence" value="ECO:0007669"/>
    <property type="project" value="InterPro"/>
</dbReference>
<dbReference type="GO" id="GO:0030130">
    <property type="term" value="C:clathrin coat of trans-Golgi network vesicle"/>
    <property type="evidence" value="ECO:0007669"/>
    <property type="project" value="InterPro"/>
</dbReference>
<dbReference type="GO" id="GO:0071439">
    <property type="term" value="C:clathrin complex"/>
    <property type="evidence" value="ECO:0000318"/>
    <property type="project" value="GO_Central"/>
</dbReference>
<dbReference type="GO" id="GO:0005737">
    <property type="term" value="C:cytoplasm"/>
    <property type="evidence" value="ECO:0007005"/>
    <property type="project" value="PomBase"/>
</dbReference>
<dbReference type="GO" id="GO:0005829">
    <property type="term" value="C:cytosol"/>
    <property type="evidence" value="ECO:0007669"/>
    <property type="project" value="GOC"/>
</dbReference>
<dbReference type="GO" id="GO:0032051">
    <property type="term" value="F:clathrin light chain binding"/>
    <property type="evidence" value="ECO:0000318"/>
    <property type="project" value="GO_Central"/>
</dbReference>
<dbReference type="GO" id="GO:0005198">
    <property type="term" value="F:structural molecule activity"/>
    <property type="evidence" value="ECO:0000266"/>
    <property type="project" value="PomBase"/>
</dbReference>
<dbReference type="GO" id="GO:0072583">
    <property type="term" value="P:clathrin-dependent endocytosis"/>
    <property type="evidence" value="ECO:0000303"/>
    <property type="project" value="PomBase"/>
</dbReference>
<dbReference type="GO" id="GO:0099638">
    <property type="term" value="P:endosome to plasma membrane protein transport"/>
    <property type="evidence" value="ECO:0000315"/>
    <property type="project" value="PomBase"/>
</dbReference>
<dbReference type="GO" id="GO:0006895">
    <property type="term" value="P:Golgi to endosome transport"/>
    <property type="evidence" value="ECO:0000318"/>
    <property type="project" value="GO_Central"/>
</dbReference>
<dbReference type="GO" id="GO:0006898">
    <property type="term" value="P:receptor-mediated endocytosis"/>
    <property type="evidence" value="ECO:0000318"/>
    <property type="project" value="GO_Central"/>
</dbReference>
<dbReference type="FunFam" id="1.25.40.10:FF:000001">
    <property type="entry name" value="Clathrin heavy chain"/>
    <property type="match status" value="1"/>
</dbReference>
<dbReference type="FunFam" id="1.25.40.10:FF:000002">
    <property type="entry name" value="Clathrin heavy chain"/>
    <property type="match status" value="1"/>
</dbReference>
<dbReference type="FunFam" id="1.25.40.10:FF:000005">
    <property type="entry name" value="Clathrin heavy chain"/>
    <property type="match status" value="1"/>
</dbReference>
<dbReference type="FunFam" id="1.25.40.10:FF:000082">
    <property type="entry name" value="Clathrin heavy chain"/>
    <property type="match status" value="1"/>
</dbReference>
<dbReference type="FunFam" id="2.130.10.110:FF:000003">
    <property type="entry name" value="Clathrin heavy chain"/>
    <property type="match status" value="1"/>
</dbReference>
<dbReference type="Gene3D" id="1.25.40.730">
    <property type="match status" value="1"/>
</dbReference>
<dbReference type="Gene3D" id="2.130.10.110">
    <property type="entry name" value="Clathrin heavy-chain terminal domain"/>
    <property type="match status" value="1"/>
</dbReference>
<dbReference type="Gene3D" id="1.25.40.10">
    <property type="entry name" value="Tetratricopeptide repeat domain"/>
    <property type="match status" value="4"/>
</dbReference>
<dbReference type="InterPro" id="IPR016024">
    <property type="entry name" value="ARM-type_fold"/>
</dbReference>
<dbReference type="InterPro" id="IPR055358">
    <property type="entry name" value="CHCR"/>
</dbReference>
<dbReference type="InterPro" id="IPR000547">
    <property type="entry name" value="Clathrin_H-chain/VPS_repeat"/>
</dbReference>
<dbReference type="InterPro" id="IPR015348">
    <property type="entry name" value="Clathrin_H-chain_linker_core"/>
</dbReference>
<dbReference type="InterPro" id="IPR016025">
    <property type="entry name" value="Clathrin_H-chain_N"/>
</dbReference>
<dbReference type="InterPro" id="IPR022365">
    <property type="entry name" value="Clathrin_H-chain_propeller_rpt"/>
</dbReference>
<dbReference type="InterPro" id="IPR016341">
    <property type="entry name" value="Clathrin_heavy_chain"/>
</dbReference>
<dbReference type="InterPro" id="IPR011990">
    <property type="entry name" value="TPR-like_helical_dom_sf"/>
</dbReference>
<dbReference type="PANTHER" id="PTHR10292:SF1">
    <property type="entry name" value="CLATHRIN HEAVY CHAIN"/>
    <property type="match status" value="1"/>
</dbReference>
<dbReference type="PANTHER" id="PTHR10292">
    <property type="entry name" value="CLATHRIN HEAVY CHAIN RELATED"/>
    <property type="match status" value="1"/>
</dbReference>
<dbReference type="Pfam" id="PF00637">
    <property type="entry name" value="Clathrin"/>
    <property type="match status" value="7"/>
</dbReference>
<dbReference type="Pfam" id="PF09268">
    <property type="entry name" value="Clathrin-link"/>
    <property type="match status" value="1"/>
</dbReference>
<dbReference type="Pfam" id="PF13838">
    <property type="entry name" value="Clathrin_H_link"/>
    <property type="match status" value="1"/>
</dbReference>
<dbReference type="Pfam" id="PF01394">
    <property type="entry name" value="Clathrin_propel"/>
    <property type="match status" value="3"/>
</dbReference>
<dbReference type="PIRSF" id="PIRSF002290">
    <property type="entry name" value="Clathrin_H_chain"/>
    <property type="match status" value="1"/>
</dbReference>
<dbReference type="SMART" id="SM00299">
    <property type="entry name" value="CLH"/>
    <property type="match status" value="7"/>
</dbReference>
<dbReference type="SUPFAM" id="SSF48371">
    <property type="entry name" value="ARM repeat"/>
    <property type="match status" value="6"/>
</dbReference>
<dbReference type="SUPFAM" id="SSF50989">
    <property type="entry name" value="Clathrin heavy-chain terminal domain"/>
    <property type="match status" value="1"/>
</dbReference>
<dbReference type="PROSITE" id="PS50236">
    <property type="entry name" value="CHCR"/>
    <property type="match status" value="7"/>
</dbReference>
<organism>
    <name type="scientific">Schizosaccharomyces pombe (strain 972 / ATCC 24843)</name>
    <name type="common">Fission yeast</name>
    <dbReference type="NCBI Taxonomy" id="284812"/>
    <lineage>
        <taxon>Eukaryota</taxon>
        <taxon>Fungi</taxon>
        <taxon>Dikarya</taxon>
        <taxon>Ascomycota</taxon>
        <taxon>Taphrinomycotina</taxon>
        <taxon>Schizosaccharomycetes</taxon>
        <taxon>Schizosaccharomycetales</taxon>
        <taxon>Schizosaccharomycetaceae</taxon>
        <taxon>Schizosaccharomyces</taxon>
    </lineage>
</organism>
<accession>Q10161</accession>
<proteinExistence type="evidence at protein level"/>
<reference key="1">
    <citation type="journal article" date="2002" name="Nature">
        <title>The genome sequence of Schizosaccharomyces pombe.</title>
        <authorList>
            <person name="Wood V."/>
            <person name="Gwilliam R."/>
            <person name="Rajandream M.A."/>
            <person name="Lyne M.H."/>
            <person name="Lyne R."/>
            <person name="Stewart A."/>
            <person name="Sgouros J.G."/>
            <person name="Peat N."/>
            <person name="Hayles J."/>
            <person name="Baker S.G."/>
            <person name="Basham D."/>
            <person name="Bowman S."/>
            <person name="Brooks K."/>
            <person name="Brown D."/>
            <person name="Brown S."/>
            <person name="Chillingworth T."/>
            <person name="Churcher C.M."/>
            <person name="Collins M."/>
            <person name="Connor R."/>
            <person name="Cronin A."/>
            <person name="Davis P."/>
            <person name="Feltwell T."/>
            <person name="Fraser A."/>
            <person name="Gentles S."/>
            <person name="Goble A."/>
            <person name="Hamlin N."/>
            <person name="Harris D.E."/>
            <person name="Hidalgo J."/>
            <person name="Hodgson G."/>
            <person name="Holroyd S."/>
            <person name="Hornsby T."/>
            <person name="Howarth S."/>
            <person name="Huckle E.J."/>
            <person name="Hunt S."/>
            <person name="Jagels K."/>
            <person name="James K.D."/>
            <person name="Jones L."/>
            <person name="Jones M."/>
            <person name="Leather S."/>
            <person name="McDonald S."/>
            <person name="McLean J."/>
            <person name="Mooney P."/>
            <person name="Moule S."/>
            <person name="Mungall K.L."/>
            <person name="Murphy L.D."/>
            <person name="Niblett D."/>
            <person name="Odell C."/>
            <person name="Oliver K."/>
            <person name="O'Neil S."/>
            <person name="Pearson D."/>
            <person name="Quail M.A."/>
            <person name="Rabbinowitsch E."/>
            <person name="Rutherford K.M."/>
            <person name="Rutter S."/>
            <person name="Saunders D."/>
            <person name="Seeger K."/>
            <person name="Sharp S."/>
            <person name="Skelton J."/>
            <person name="Simmonds M.N."/>
            <person name="Squares R."/>
            <person name="Squares S."/>
            <person name="Stevens K."/>
            <person name="Taylor K."/>
            <person name="Taylor R.G."/>
            <person name="Tivey A."/>
            <person name="Walsh S.V."/>
            <person name="Warren T."/>
            <person name="Whitehead S."/>
            <person name="Woodward J.R."/>
            <person name="Volckaert G."/>
            <person name="Aert R."/>
            <person name="Robben J."/>
            <person name="Grymonprez B."/>
            <person name="Weltjens I."/>
            <person name="Vanstreels E."/>
            <person name="Rieger M."/>
            <person name="Schaefer M."/>
            <person name="Mueller-Auer S."/>
            <person name="Gabel C."/>
            <person name="Fuchs M."/>
            <person name="Duesterhoeft A."/>
            <person name="Fritzc C."/>
            <person name="Holzer E."/>
            <person name="Moestl D."/>
            <person name="Hilbert H."/>
            <person name="Borzym K."/>
            <person name="Langer I."/>
            <person name="Beck A."/>
            <person name="Lehrach H."/>
            <person name="Reinhardt R."/>
            <person name="Pohl T.M."/>
            <person name="Eger P."/>
            <person name="Zimmermann W."/>
            <person name="Wedler H."/>
            <person name="Wambutt R."/>
            <person name="Purnelle B."/>
            <person name="Goffeau A."/>
            <person name="Cadieu E."/>
            <person name="Dreano S."/>
            <person name="Gloux S."/>
            <person name="Lelaure V."/>
            <person name="Mottier S."/>
            <person name="Galibert F."/>
            <person name="Aves S.J."/>
            <person name="Xiang Z."/>
            <person name="Hunt C."/>
            <person name="Moore K."/>
            <person name="Hurst S.M."/>
            <person name="Lucas M."/>
            <person name="Rochet M."/>
            <person name="Gaillardin C."/>
            <person name="Tallada V.A."/>
            <person name="Garzon A."/>
            <person name="Thode G."/>
            <person name="Daga R.R."/>
            <person name="Cruzado L."/>
            <person name="Jimenez J."/>
            <person name="Sanchez M."/>
            <person name="del Rey F."/>
            <person name="Benito J."/>
            <person name="Dominguez A."/>
            <person name="Revuelta J.L."/>
            <person name="Moreno S."/>
            <person name="Armstrong J."/>
            <person name="Forsburg S.L."/>
            <person name="Cerutti L."/>
            <person name="Lowe T."/>
            <person name="McCombie W.R."/>
            <person name="Paulsen I."/>
            <person name="Potashkin J."/>
            <person name="Shpakovski G.V."/>
            <person name="Ussery D."/>
            <person name="Barrell B.G."/>
            <person name="Nurse P."/>
        </authorList>
    </citation>
    <scope>NUCLEOTIDE SEQUENCE [LARGE SCALE GENOMIC DNA]</scope>
    <source>
        <strain>972 / ATCC 24843</strain>
    </source>
</reference>
<reference key="2">
    <citation type="journal article" date="2008" name="J. Proteome Res.">
        <title>Phosphoproteome analysis of fission yeast.</title>
        <authorList>
            <person name="Wilson-Grady J.T."/>
            <person name="Villen J."/>
            <person name="Gygi S.P."/>
        </authorList>
    </citation>
    <scope>PHOSPHORYLATION [LARGE SCALE ANALYSIS] AT THR-392 AND SER-393</scope>
    <scope>IDENTIFICATION BY MASS SPECTROMETRY</scope>
</reference>
<sequence>MAQQLPIRFSEVLQLASVGIQPSSFGFANVTLESDKYVCVRDNPNGVNQVVIVDLEDPSNVLRRPISADSVILHPKKKIIALKAQRQLQVFDLEAKAKINSYVMNQDVVYWTWISDSVIGMVTDTSVFHWTVSGSDPVKMFDRHSSLNGTQIISYKSNYNEEWFTLIGISSRDNRIAGNLQLYSKKRKVSQPLESHASAFAVIQPEGVDHEVQVLALASRLPTGSKLSIVEVDRNPNNPAFATKTVDLFFPPEAVNDFPIAIEIGSTYNVAYVVTKYGFIHVYDLETAKCIYMNRVSGESIFVTTAHKSVNGLMAINRKGQVLSVSINPETIIPYILSNLNDPGLAVRMASHANLPGADNLYMQQFQQLMAQGNYSEAAKVAASSPRGILRTSQVIDQFKLIQAAPGQIAPILQYFGTLLDKGPLNEHETIELARPVLAQNRIQLLEKWYGENKLACTEALGDLVKPYNTPFALKIYETANVPNKVVMCLSELGDFGKLATYTSQQNITPDYVSLLQNLVRVNPDQAAEFATQMFNSNPSINLEKIVDIFMSQNLVQQATAFLLDALKDDNPEHSHLQTRLLEINLINAPQVADAILGNQMFTHFDRAVIASLCERAGLVQRALELYDKPADIKRVIVHSNLLNPEWLMNYFSRFSPDEVYDYLREMLRSNLRQNLQIVVQIATRYSDLVGAQRIIEMFEKFKTFEGLYYYLGSIVNITEDPEVVYKYIQAACLMNQFTEVERICRDNNVYNPEKVKNLLKEAKLADQLPLILVCDRYDFVNDLVFYLFRNNMFQFIEIYVQRINPSKTPQVVGALLDIDCDEELVQNLLMSVVGQVPVDELVEEVERRNRLKLLLPYLESLLQSGSQDRAIYDALAKIYIDSNNNPEVFLKENNFYDTLTVGKYCEKRDPYLAFIAYEKGGNDTEIINLCNENSMFKQLARYLLKRSDSNLWSEVLQDSAYRRPLLDQVIATAVPESSDPEAVSIVVKALMEVDLPSQLIELLEKIVLQPSSFSENANLQNLLFLTAIKADKSRVMEYIDKLDKYDVDEIAEIAIENGLYEEAFRIYKIHNKHEQAMKVLVEDIVSLDRAQDYAETVEQPEVWSRLAKAQLDGIRIPDAIESYLKADDPSNYSEVIELASRAGKYEELIKYLLMARSKMHEPDVDSALLIAYAKTNQLTEMETFLIGSNVADVKAVGDECFESKNYEAAKLMYSSISNWSMLATTLVYLGEYQGAVDCARKANSIKVWKQVGTACIDKREFRLAQICGLNLIVHAEELPGLIRLYEERGYFEEVISLMEAGLGLERAHMAFYTELAILYAKYKPERMMEHLKLFWGRLNMAKVIRACDQMHLWNEAVFLYVHDQSYDNAAAVMMEQPEAFDHQSFKDIIVHVANLELYYRALNFYLEQHPMLLTDLLAALTPRIDHPRVIRIFEKSENTPLILNFMVAIQHLNIQAVNHAYNDLLIEMEDYQSLQDSIENYDHFDAIALARRLEKHSLLEFRRIAAYIYRKNKRWTQSIELSKQDRFYKDAIITARDSDQTTIAEDLMKYFVEIGNYECFAAILYTCYHLLRNDLVMEISWRKGLQDYAYPYFINFQCEMFSKVLNLEKDLKDRQAVKSEEESASTIGAGILGNTLMLTQGPMANNNDQFDSFQQASPMPRLGNF</sequence>